<dbReference type="EMBL" id="AE016795">
    <property type="protein sequence ID" value="AAO10035.1"/>
    <property type="molecule type" value="Genomic_DNA"/>
</dbReference>
<dbReference type="RefSeq" id="WP_011079542.1">
    <property type="nucleotide sequence ID" value="NC_004459.3"/>
</dbReference>
<dbReference type="SMR" id="Q8DC32"/>
<dbReference type="KEGG" id="vvu:VV1_1616"/>
<dbReference type="HOGENOM" id="CLU_077636_1_0_6"/>
<dbReference type="Proteomes" id="UP000002275">
    <property type="component" value="Chromosome 1"/>
</dbReference>
<dbReference type="GO" id="GO:0005737">
    <property type="term" value="C:cytoplasm"/>
    <property type="evidence" value="ECO:0007669"/>
    <property type="project" value="UniProtKB-SubCell"/>
</dbReference>
<dbReference type="GO" id="GO:0005840">
    <property type="term" value="C:ribosome"/>
    <property type="evidence" value="ECO:0007669"/>
    <property type="project" value="InterPro"/>
</dbReference>
<dbReference type="GO" id="GO:0043022">
    <property type="term" value="F:ribosome binding"/>
    <property type="evidence" value="ECO:0007669"/>
    <property type="project" value="InterPro"/>
</dbReference>
<dbReference type="GO" id="GO:0042274">
    <property type="term" value="P:ribosomal small subunit biogenesis"/>
    <property type="evidence" value="ECO:0007669"/>
    <property type="project" value="UniProtKB-UniRule"/>
</dbReference>
<dbReference type="GO" id="GO:0006364">
    <property type="term" value="P:rRNA processing"/>
    <property type="evidence" value="ECO:0007669"/>
    <property type="project" value="UniProtKB-UniRule"/>
</dbReference>
<dbReference type="FunFam" id="2.30.30.240:FF:000001">
    <property type="entry name" value="Ribosome maturation factor RimM"/>
    <property type="match status" value="1"/>
</dbReference>
<dbReference type="Gene3D" id="2.30.30.240">
    <property type="entry name" value="PRC-barrel domain"/>
    <property type="match status" value="1"/>
</dbReference>
<dbReference type="Gene3D" id="2.40.30.60">
    <property type="entry name" value="RimM"/>
    <property type="match status" value="1"/>
</dbReference>
<dbReference type="HAMAP" id="MF_00014">
    <property type="entry name" value="Ribosome_mat_RimM"/>
    <property type="match status" value="1"/>
</dbReference>
<dbReference type="InterPro" id="IPR027275">
    <property type="entry name" value="PRC-brl_dom"/>
</dbReference>
<dbReference type="InterPro" id="IPR011033">
    <property type="entry name" value="PRC_barrel-like_sf"/>
</dbReference>
<dbReference type="InterPro" id="IPR011961">
    <property type="entry name" value="RimM"/>
</dbReference>
<dbReference type="InterPro" id="IPR002676">
    <property type="entry name" value="RimM_N"/>
</dbReference>
<dbReference type="InterPro" id="IPR036976">
    <property type="entry name" value="RimM_N_sf"/>
</dbReference>
<dbReference type="InterPro" id="IPR009000">
    <property type="entry name" value="Transl_B-barrel_sf"/>
</dbReference>
<dbReference type="NCBIfam" id="TIGR02273">
    <property type="entry name" value="16S_RimM"/>
    <property type="match status" value="1"/>
</dbReference>
<dbReference type="PANTHER" id="PTHR33692">
    <property type="entry name" value="RIBOSOME MATURATION FACTOR RIMM"/>
    <property type="match status" value="1"/>
</dbReference>
<dbReference type="PANTHER" id="PTHR33692:SF1">
    <property type="entry name" value="RIBOSOME MATURATION FACTOR RIMM"/>
    <property type="match status" value="1"/>
</dbReference>
<dbReference type="Pfam" id="PF05239">
    <property type="entry name" value="PRC"/>
    <property type="match status" value="1"/>
</dbReference>
<dbReference type="Pfam" id="PF01782">
    <property type="entry name" value="RimM"/>
    <property type="match status" value="1"/>
</dbReference>
<dbReference type="SUPFAM" id="SSF50346">
    <property type="entry name" value="PRC-barrel domain"/>
    <property type="match status" value="1"/>
</dbReference>
<dbReference type="SUPFAM" id="SSF50447">
    <property type="entry name" value="Translation proteins"/>
    <property type="match status" value="1"/>
</dbReference>
<feature type="chain" id="PRO_0000163386" description="Ribosome maturation factor RimM">
    <location>
        <begin position="1"/>
        <end position="182"/>
    </location>
</feature>
<feature type="domain" description="PRC barrel" evidence="1">
    <location>
        <begin position="103"/>
        <end position="182"/>
    </location>
</feature>
<protein>
    <recommendedName>
        <fullName evidence="1">Ribosome maturation factor RimM</fullName>
    </recommendedName>
</protein>
<gene>
    <name evidence="1" type="primary">rimM</name>
    <name type="ordered locus">VV1_1616</name>
</gene>
<keyword id="KW-0143">Chaperone</keyword>
<keyword id="KW-0963">Cytoplasm</keyword>
<keyword id="KW-0690">Ribosome biogenesis</keyword>
<keyword id="KW-0698">rRNA processing</keyword>
<sequence length="182" mass="20965">MSMKGKETMSDERIVVGKFGSTYGIRGWLKVFSYTDNAESLFDYSPWYVNQKGEWVEFKVESWKRHNKGMVAKLEGLDVREDAHLLTNLEIAIDPAVLPELSEDEFYWRELFGMQVVTTNGYDLGVVTDMLETGSNDVLVVKANLKDAFGQKERLIPFLEEQVIIKVDREAQRIEVDWDPGF</sequence>
<name>RIMM_VIBVU</name>
<evidence type="ECO:0000255" key="1">
    <source>
        <dbReference type="HAMAP-Rule" id="MF_00014"/>
    </source>
</evidence>
<comment type="function">
    <text evidence="1">An accessory protein needed during the final step in the assembly of 30S ribosomal subunit, possibly for assembly of the head region. Essential for efficient processing of 16S rRNA. May be needed both before and after RbfA during the maturation of 16S rRNA. It has affinity for free ribosomal 30S subunits but not for 70S ribosomes.</text>
</comment>
<comment type="subunit">
    <text evidence="1">Binds ribosomal protein uS19.</text>
</comment>
<comment type="subcellular location">
    <subcellularLocation>
        <location evidence="1">Cytoplasm</location>
    </subcellularLocation>
</comment>
<comment type="domain">
    <text evidence="1">The PRC barrel domain binds ribosomal protein uS19.</text>
</comment>
<comment type="similarity">
    <text evidence="1">Belongs to the RimM family.</text>
</comment>
<accession>Q8DC32</accession>
<reference key="1">
    <citation type="submission" date="2002-12" db="EMBL/GenBank/DDBJ databases">
        <title>Complete genome sequence of Vibrio vulnificus CMCP6.</title>
        <authorList>
            <person name="Rhee J.H."/>
            <person name="Kim S.Y."/>
            <person name="Chung S.S."/>
            <person name="Kim J.J."/>
            <person name="Moon Y.H."/>
            <person name="Jeong H."/>
            <person name="Choy H.E."/>
        </authorList>
    </citation>
    <scope>NUCLEOTIDE SEQUENCE [LARGE SCALE GENOMIC DNA]</scope>
    <source>
        <strain>CMCP6</strain>
    </source>
</reference>
<proteinExistence type="inferred from homology"/>
<organism>
    <name type="scientific">Vibrio vulnificus (strain CMCP6)</name>
    <dbReference type="NCBI Taxonomy" id="216895"/>
    <lineage>
        <taxon>Bacteria</taxon>
        <taxon>Pseudomonadati</taxon>
        <taxon>Pseudomonadota</taxon>
        <taxon>Gammaproteobacteria</taxon>
        <taxon>Vibrionales</taxon>
        <taxon>Vibrionaceae</taxon>
        <taxon>Vibrio</taxon>
    </lineage>
</organism>